<accession>Q211Y8</accession>
<sequence length="316" mass="33906">MSVATSDMAEAIPERGRAVLIAGPTASGKSALALALAEACGGVIINTDSMQVYGDLRVLTARPTPADEARVPHRLYGTVDAAVNFSAGAWVEAAAAALADARGRGLLPIFVGGSGLYFKALTRGLSAVPAIAPQVREDVRARLEQGGVEALHAALARRDPTSAARLNPNDRSRVARALEVVEATGRSLTDWHRDALPPLLPPEQVTALFLAPQRDELYARIDARFELMLQAGALDEVAALAARKLDPLLPAMKAHGVPALIRHLKGEISRDEAASIGCADTRHYAKRQFTWFRHQLPEFEWVAPDRAAERLERQTG</sequence>
<gene>
    <name evidence="1" type="primary">miaA</name>
    <name type="ordered locus">RPC_3256</name>
</gene>
<dbReference type="EC" id="2.5.1.75" evidence="1"/>
<dbReference type="EMBL" id="CP000301">
    <property type="protein sequence ID" value="ABD88798.1"/>
    <property type="status" value="ALT_INIT"/>
    <property type="molecule type" value="Genomic_DNA"/>
</dbReference>
<dbReference type="SMR" id="Q211Y8"/>
<dbReference type="STRING" id="316056.RPC_3256"/>
<dbReference type="KEGG" id="rpc:RPC_3256"/>
<dbReference type="eggNOG" id="COG0324">
    <property type="taxonomic scope" value="Bacteria"/>
</dbReference>
<dbReference type="HOGENOM" id="CLU_032616_0_1_5"/>
<dbReference type="OrthoDB" id="9776390at2"/>
<dbReference type="GO" id="GO:0005524">
    <property type="term" value="F:ATP binding"/>
    <property type="evidence" value="ECO:0007669"/>
    <property type="project" value="UniProtKB-UniRule"/>
</dbReference>
<dbReference type="GO" id="GO:0052381">
    <property type="term" value="F:tRNA dimethylallyltransferase activity"/>
    <property type="evidence" value="ECO:0007669"/>
    <property type="project" value="UniProtKB-UniRule"/>
</dbReference>
<dbReference type="GO" id="GO:0006400">
    <property type="term" value="P:tRNA modification"/>
    <property type="evidence" value="ECO:0007669"/>
    <property type="project" value="TreeGrafter"/>
</dbReference>
<dbReference type="FunFam" id="1.10.20.140:FF:000001">
    <property type="entry name" value="tRNA dimethylallyltransferase"/>
    <property type="match status" value="1"/>
</dbReference>
<dbReference type="Gene3D" id="1.10.20.140">
    <property type="match status" value="1"/>
</dbReference>
<dbReference type="Gene3D" id="3.40.50.300">
    <property type="entry name" value="P-loop containing nucleotide triphosphate hydrolases"/>
    <property type="match status" value="1"/>
</dbReference>
<dbReference type="HAMAP" id="MF_00185">
    <property type="entry name" value="IPP_trans"/>
    <property type="match status" value="1"/>
</dbReference>
<dbReference type="InterPro" id="IPR039657">
    <property type="entry name" value="Dimethylallyltransferase"/>
</dbReference>
<dbReference type="InterPro" id="IPR018022">
    <property type="entry name" value="IPT"/>
</dbReference>
<dbReference type="InterPro" id="IPR027417">
    <property type="entry name" value="P-loop_NTPase"/>
</dbReference>
<dbReference type="NCBIfam" id="TIGR00174">
    <property type="entry name" value="miaA"/>
    <property type="match status" value="1"/>
</dbReference>
<dbReference type="PANTHER" id="PTHR11088">
    <property type="entry name" value="TRNA DIMETHYLALLYLTRANSFERASE"/>
    <property type="match status" value="1"/>
</dbReference>
<dbReference type="PANTHER" id="PTHR11088:SF60">
    <property type="entry name" value="TRNA DIMETHYLALLYLTRANSFERASE"/>
    <property type="match status" value="1"/>
</dbReference>
<dbReference type="Pfam" id="PF01715">
    <property type="entry name" value="IPPT"/>
    <property type="match status" value="1"/>
</dbReference>
<dbReference type="SUPFAM" id="SSF52540">
    <property type="entry name" value="P-loop containing nucleoside triphosphate hydrolases"/>
    <property type="match status" value="2"/>
</dbReference>
<proteinExistence type="inferred from homology"/>
<comment type="function">
    <text evidence="1">Catalyzes the transfer of a dimethylallyl group onto the adenine at position 37 in tRNAs that read codons beginning with uridine, leading to the formation of N6-(dimethylallyl)adenosine (i(6)A).</text>
</comment>
<comment type="catalytic activity">
    <reaction evidence="1">
        <text>adenosine(37) in tRNA + dimethylallyl diphosphate = N(6)-dimethylallyladenosine(37) in tRNA + diphosphate</text>
        <dbReference type="Rhea" id="RHEA:26482"/>
        <dbReference type="Rhea" id="RHEA-COMP:10162"/>
        <dbReference type="Rhea" id="RHEA-COMP:10375"/>
        <dbReference type="ChEBI" id="CHEBI:33019"/>
        <dbReference type="ChEBI" id="CHEBI:57623"/>
        <dbReference type="ChEBI" id="CHEBI:74411"/>
        <dbReference type="ChEBI" id="CHEBI:74415"/>
        <dbReference type="EC" id="2.5.1.75"/>
    </reaction>
</comment>
<comment type="cofactor">
    <cofactor evidence="1">
        <name>Mg(2+)</name>
        <dbReference type="ChEBI" id="CHEBI:18420"/>
    </cofactor>
</comment>
<comment type="subunit">
    <text evidence="1">Monomer.</text>
</comment>
<comment type="similarity">
    <text evidence="1">Belongs to the IPP transferase family.</text>
</comment>
<comment type="sequence caution" evidence="2">
    <conflict type="erroneous initiation">
        <sequence resource="EMBL-CDS" id="ABD88798"/>
    </conflict>
</comment>
<name>MIAA_RHOPB</name>
<organism>
    <name type="scientific">Rhodopseudomonas palustris (strain BisB18)</name>
    <dbReference type="NCBI Taxonomy" id="316056"/>
    <lineage>
        <taxon>Bacteria</taxon>
        <taxon>Pseudomonadati</taxon>
        <taxon>Pseudomonadota</taxon>
        <taxon>Alphaproteobacteria</taxon>
        <taxon>Hyphomicrobiales</taxon>
        <taxon>Nitrobacteraceae</taxon>
        <taxon>Rhodopseudomonas</taxon>
    </lineage>
</organism>
<feature type="chain" id="PRO_0000377289" description="tRNA dimethylallyltransferase">
    <location>
        <begin position="1"/>
        <end position="316"/>
    </location>
</feature>
<feature type="region of interest" description="Interaction with substrate tRNA" evidence="1">
    <location>
        <begin position="48"/>
        <end position="51"/>
    </location>
</feature>
<feature type="binding site" evidence="1">
    <location>
        <begin position="23"/>
        <end position="30"/>
    </location>
    <ligand>
        <name>ATP</name>
        <dbReference type="ChEBI" id="CHEBI:30616"/>
    </ligand>
</feature>
<feature type="binding site" evidence="1">
    <location>
        <begin position="25"/>
        <end position="30"/>
    </location>
    <ligand>
        <name>substrate</name>
    </ligand>
</feature>
<feature type="site" description="Interaction with substrate tRNA" evidence="1">
    <location>
        <position position="114"/>
    </location>
</feature>
<feature type="site" description="Interaction with substrate tRNA" evidence="1">
    <location>
        <position position="136"/>
    </location>
</feature>
<evidence type="ECO:0000255" key="1">
    <source>
        <dbReference type="HAMAP-Rule" id="MF_00185"/>
    </source>
</evidence>
<evidence type="ECO:0000305" key="2"/>
<reference key="1">
    <citation type="submission" date="2006-03" db="EMBL/GenBank/DDBJ databases">
        <title>Complete sequence of Rhodopseudomonas palustris BisB18.</title>
        <authorList>
            <consortium name="US DOE Joint Genome Institute"/>
            <person name="Copeland A."/>
            <person name="Lucas S."/>
            <person name="Lapidus A."/>
            <person name="Barry K."/>
            <person name="Detter J.C."/>
            <person name="Glavina del Rio T."/>
            <person name="Hammon N."/>
            <person name="Israni S."/>
            <person name="Dalin E."/>
            <person name="Tice H."/>
            <person name="Pitluck S."/>
            <person name="Chain P."/>
            <person name="Malfatti S."/>
            <person name="Shin M."/>
            <person name="Vergez L."/>
            <person name="Schmutz J."/>
            <person name="Larimer F."/>
            <person name="Land M."/>
            <person name="Hauser L."/>
            <person name="Pelletier D.A."/>
            <person name="Kyrpides N."/>
            <person name="Anderson I."/>
            <person name="Oda Y."/>
            <person name="Harwood C.S."/>
            <person name="Richardson P."/>
        </authorList>
    </citation>
    <scope>NUCLEOTIDE SEQUENCE [LARGE SCALE GENOMIC DNA]</scope>
    <source>
        <strain>BisB18</strain>
    </source>
</reference>
<keyword id="KW-0067">ATP-binding</keyword>
<keyword id="KW-0460">Magnesium</keyword>
<keyword id="KW-0547">Nucleotide-binding</keyword>
<keyword id="KW-0808">Transferase</keyword>
<keyword id="KW-0819">tRNA processing</keyword>
<protein>
    <recommendedName>
        <fullName evidence="1">tRNA dimethylallyltransferase</fullName>
        <ecNumber evidence="1">2.5.1.75</ecNumber>
    </recommendedName>
    <alternativeName>
        <fullName evidence="1">Dimethylallyl diphosphate:tRNA dimethylallyltransferase</fullName>
        <shortName evidence="1">DMAPP:tRNA dimethylallyltransferase</shortName>
        <shortName evidence="1">DMATase</shortName>
    </alternativeName>
    <alternativeName>
        <fullName evidence="1">Isopentenyl-diphosphate:tRNA isopentenyltransferase</fullName>
        <shortName evidence="1">IPP transferase</shortName>
        <shortName evidence="1">IPPT</shortName>
        <shortName evidence="1">IPTase</shortName>
    </alternativeName>
</protein>